<comment type="similarity">
    <text evidence="1">Belongs to the UPF0284 family.</text>
</comment>
<dbReference type="EMBL" id="CP000828">
    <property type="protein sequence ID" value="ABW30100.1"/>
    <property type="molecule type" value="Genomic_DNA"/>
</dbReference>
<dbReference type="SMR" id="B0C8E5"/>
<dbReference type="STRING" id="329726.AM1_5137"/>
<dbReference type="KEGG" id="amr:AM1_5137"/>
<dbReference type="eggNOG" id="COG2038">
    <property type="taxonomic scope" value="Bacteria"/>
</dbReference>
<dbReference type="HOGENOM" id="CLU_053134_1_0_3"/>
<dbReference type="OrthoDB" id="418257at2"/>
<dbReference type="Proteomes" id="UP000000268">
    <property type="component" value="Chromosome"/>
</dbReference>
<dbReference type="GO" id="GO:0008939">
    <property type="term" value="F:nicotinate-nucleotide-dimethylbenzimidazole phosphoribosyltransferase activity"/>
    <property type="evidence" value="ECO:0007669"/>
    <property type="project" value="InterPro"/>
</dbReference>
<dbReference type="Gene3D" id="3.40.50.10210">
    <property type="match status" value="1"/>
</dbReference>
<dbReference type="HAMAP" id="MF_01086">
    <property type="entry name" value="UPF0284"/>
    <property type="match status" value="1"/>
</dbReference>
<dbReference type="InterPro" id="IPR002805">
    <property type="entry name" value="Nict_dMeBzImd_PRibTrfase_arc"/>
</dbReference>
<dbReference type="InterPro" id="IPR036087">
    <property type="entry name" value="Nict_dMeBzImd_PRibTrfase_sf"/>
</dbReference>
<dbReference type="NCBIfam" id="TIGR00303">
    <property type="entry name" value="nicotinate mononucleotide-dependent phosphoribosyltransferase CobT"/>
    <property type="match status" value="1"/>
</dbReference>
<dbReference type="NCBIfam" id="NF003373">
    <property type="entry name" value="PRK04447.1-6"/>
    <property type="match status" value="1"/>
</dbReference>
<dbReference type="PANTHER" id="PTHR38811">
    <property type="match status" value="1"/>
</dbReference>
<dbReference type="PANTHER" id="PTHR38811:SF1">
    <property type="entry name" value="UPF0284 PROTEIN SLL1500"/>
    <property type="match status" value="1"/>
</dbReference>
<dbReference type="SUPFAM" id="SSF52733">
    <property type="entry name" value="Nicotinate mononucleotide:5,6-dimethylbenzimidazole phosphoribosyltransferase (CobT)"/>
    <property type="match status" value="1"/>
</dbReference>
<protein>
    <recommendedName>
        <fullName evidence="1">UPF0284 protein AM1_5137</fullName>
    </recommendedName>
</protein>
<feature type="chain" id="PRO_1000084782" description="UPF0284 protein AM1_5137">
    <location>
        <begin position="1"/>
        <end position="369"/>
    </location>
</feature>
<gene>
    <name type="ordered locus">AM1_5137</name>
</gene>
<keyword id="KW-1185">Reference proteome</keyword>
<sequence length="369" mass="39620">MLRVYTQLERGNQWLKQYEGRSPIFACVLGFTETGLIPNVSTAGATPADRSLTALADAEFLFNGPQSQPTYPLPDLAQGVSPAMISWPIYTSQNFPFQLFNAGLRHSPPVPTVDLRGQAARCLSSGMALPLPIVELLFQQGLEWGETLAKQAADGYLILAECVVGGTSTAQGILTGLGFSVAGQVNSSHPVCNHQQKHQLVEAGLAQAGQQDWLAHPLALVAAVGDPMQVVVAGMMITASRTCGVMLAGGTQMLAVYALARQISQIFRLPWTPDNLLVGTTRWVVEDPSGDTVALANQVGEVPLVATQLSFATSRYPQLQIFEQGFVKEGVGAGGCAIAAHLYQGWQQNDILNAVEQTLEDYYRLRDPN</sequence>
<organism>
    <name type="scientific">Acaryochloris marina (strain MBIC 11017)</name>
    <dbReference type="NCBI Taxonomy" id="329726"/>
    <lineage>
        <taxon>Bacteria</taxon>
        <taxon>Bacillati</taxon>
        <taxon>Cyanobacteriota</taxon>
        <taxon>Cyanophyceae</taxon>
        <taxon>Acaryochloridales</taxon>
        <taxon>Acaryochloridaceae</taxon>
        <taxon>Acaryochloris</taxon>
    </lineage>
</organism>
<name>Y5137_ACAM1</name>
<proteinExistence type="inferred from homology"/>
<accession>B0C8E5</accession>
<evidence type="ECO:0000255" key="1">
    <source>
        <dbReference type="HAMAP-Rule" id="MF_01086"/>
    </source>
</evidence>
<reference key="1">
    <citation type="journal article" date="2008" name="Proc. Natl. Acad. Sci. U.S.A.">
        <title>Niche adaptation and genome expansion in the chlorophyll d-producing cyanobacterium Acaryochloris marina.</title>
        <authorList>
            <person name="Swingley W.D."/>
            <person name="Chen M."/>
            <person name="Cheung P.C."/>
            <person name="Conrad A.L."/>
            <person name="Dejesa L.C."/>
            <person name="Hao J."/>
            <person name="Honchak B.M."/>
            <person name="Karbach L.E."/>
            <person name="Kurdoglu A."/>
            <person name="Lahiri S."/>
            <person name="Mastrian S.D."/>
            <person name="Miyashita H."/>
            <person name="Page L."/>
            <person name="Ramakrishna P."/>
            <person name="Satoh S."/>
            <person name="Sattley W.M."/>
            <person name="Shimada Y."/>
            <person name="Taylor H.L."/>
            <person name="Tomo T."/>
            <person name="Tsuchiya T."/>
            <person name="Wang Z.T."/>
            <person name="Raymond J."/>
            <person name="Mimuro M."/>
            <person name="Blankenship R.E."/>
            <person name="Touchman J.W."/>
        </authorList>
    </citation>
    <scope>NUCLEOTIDE SEQUENCE [LARGE SCALE GENOMIC DNA]</scope>
    <source>
        <strain>MBIC 11017</strain>
    </source>
</reference>